<feature type="signal peptide" evidence="6">
    <location>
        <begin position="1"/>
        <end position="21"/>
    </location>
</feature>
<feature type="chain" id="PRO_5002845320" description="Short-chain dehydrogenase/reductase prx4">
    <location>
        <begin position="22"/>
        <end position="329"/>
    </location>
</feature>
<feature type="transmembrane region" description="Helical" evidence="6">
    <location>
        <begin position="238"/>
        <end position="258"/>
    </location>
</feature>
<feature type="active site" description="Proton acceptor" evidence="8">
    <location>
        <position position="194"/>
    </location>
</feature>
<feature type="active site" description="Lowers pKa of active site Tyr" evidence="2">
    <location>
        <position position="198"/>
    </location>
</feature>
<feature type="binding site" evidence="1">
    <location>
        <position position="58"/>
    </location>
    <ligand>
        <name>NADP(+)</name>
        <dbReference type="ChEBI" id="CHEBI:58349"/>
    </ligand>
</feature>
<feature type="binding site" evidence="1">
    <location>
        <position position="60"/>
    </location>
    <ligand>
        <name>NADP(+)</name>
        <dbReference type="ChEBI" id="CHEBI:58349"/>
    </ligand>
</feature>
<feature type="binding site" evidence="1">
    <location>
        <position position="81"/>
    </location>
    <ligand>
        <name>NADP(+)</name>
        <dbReference type="ChEBI" id="CHEBI:58349"/>
    </ligand>
</feature>
<feature type="binding site" evidence="1">
    <location>
        <position position="98"/>
    </location>
    <ligand>
        <name>NADP(+)</name>
        <dbReference type="ChEBI" id="CHEBI:58349"/>
    </ligand>
</feature>
<feature type="binding site" evidence="2">
    <location>
        <position position="121"/>
    </location>
    <ligand>
        <name>NADP(+)</name>
        <dbReference type="ChEBI" id="CHEBI:58349"/>
    </ligand>
</feature>
<feature type="binding site" evidence="1">
    <location>
        <position position="161"/>
    </location>
    <ligand>
        <name>NADP(+)</name>
        <dbReference type="ChEBI" id="CHEBI:58349"/>
    </ligand>
</feature>
<feature type="binding site" evidence="2">
    <location>
        <position position="194"/>
    </location>
    <ligand>
        <name>NADP(+)</name>
        <dbReference type="ChEBI" id="CHEBI:58349"/>
    </ligand>
</feature>
<feature type="binding site" evidence="2">
    <location>
        <position position="198"/>
    </location>
    <ligand>
        <name>NADP(+)</name>
        <dbReference type="ChEBI" id="CHEBI:58349"/>
    </ligand>
</feature>
<feature type="binding site" evidence="1">
    <location>
        <position position="229"/>
    </location>
    <ligand>
        <name>NADP(+)</name>
        <dbReference type="ChEBI" id="CHEBI:58349"/>
    </ligand>
</feature>
<feature type="glycosylation site" description="N-linked (GlcNAc...) asparagine" evidence="7">
    <location>
        <position position="91"/>
    </location>
</feature>
<proteinExistence type="evidence at transcript level"/>
<evidence type="ECO:0000250" key="1">
    <source>
        <dbReference type="UniProtKB" id="L0E2Z4"/>
    </source>
</evidence>
<evidence type="ECO:0000250" key="2">
    <source>
        <dbReference type="UniProtKB" id="O93868"/>
    </source>
</evidence>
<evidence type="ECO:0000250" key="3">
    <source>
        <dbReference type="UniProtKB" id="W6Q3Z9"/>
    </source>
</evidence>
<evidence type="ECO:0000250" key="4">
    <source>
        <dbReference type="UniProtKB" id="W6QB15"/>
    </source>
</evidence>
<evidence type="ECO:0000250" key="5">
    <source>
        <dbReference type="UniProtKB" id="W6QP10"/>
    </source>
</evidence>
<evidence type="ECO:0000255" key="6"/>
<evidence type="ECO:0000255" key="7">
    <source>
        <dbReference type="PROSITE-ProRule" id="PRU00498"/>
    </source>
</evidence>
<evidence type="ECO:0000255" key="8">
    <source>
        <dbReference type="PROSITE-ProRule" id="PRU10001"/>
    </source>
</evidence>
<evidence type="ECO:0000269" key="9">
    <source>
    </source>
</evidence>
<evidence type="ECO:0000303" key="10">
    <source>
    </source>
</evidence>
<evidence type="ECO:0000305" key="11"/>
<evidence type="ECO:0000305" key="12">
    <source>
    </source>
</evidence>
<comment type="function">
    <text evidence="3 4 5 9">Short-chain dehydrogenase/reductase; part of the gene cluster that mediates the biosynthesis of PR-toxin, a bicyclic sesquiterpene belonging to the eremophilane class and acting as a mycotoxin (PubMed:24239699). The first step of the pathway is catalyzed by the aristolochene synthase which performs the cyclization of trans,trans-farnesyl diphosphate (FPP) to the bicyclic sesquiterpene aristolochene (PubMed:24239699). Following the formation of aristolochene, the non-oxygenated aristolochene is converted to the trioxygenated intermediate eremofortin B, via 7-epi-neopetasone (PubMed:24239699). This conversion appears to involve three enzymes, a hydroxysterol oxidase-like enzyme, the quinone-oxidase prx3 that forms the quinone-type-structure in the bicyclic nucleus of aristolochene with the C8-oxo group and the C-3 hydroxyl group, and the P450 monooxygenase prx9 that introduces the epoxide at the double bond between carbons 1 and 2 (By similarity) (PubMed:24239699). No monoxy or dioxy-intermediates have been reported to be released to the broth, so these three early oxidative reactions may be coupled together (PubMed:24239699). Eremofortin B is further oxidized by another P450 monooxygenase, that introduces a second epoxide between carbons 7 and 11 prior to acetylation to eremofortin A by the acetyltransferase prx11 (By similarity). The second epoxidation may be performed by a second P450 monooxygenase (PubMed:24239699). After the acetylation step, eremofortin A is converted to eremofortin C and then to PR-toxin (PubMed:24239699). First the conversion of eremofortin A to eremofortin C proceeds by oxidation of the side chain of the molecule at C-12 and is catalyzed by the short-chain oxidoreductase prx1 (PubMed:24239699). The cytochrome P450 monooxygenase prx8 also plays a role in this step (By similarity). The primary alcohol formed at C-12 is finally oxidized by the short-chain alcohol dehydrogenase prx4 that forms PR-toxin (PubMed:24239699).</text>
</comment>
<comment type="pathway">
    <text evidence="9">Sesquiterpene biosynthesis.</text>
</comment>
<comment type="subcellular location">
    <subcellularLocation>
        <location evidence="6">Membrane</location>
        <topology evidence="6">Single-pass membrane protein</topology>
    </subcellularLocation>
</comment>
<comment type="induction">
    <text evidence="9">Expression and the subsequent production of PR-toxin take place under static culture conditions (oxygen limited), whereas no expression of the PR-toxin genes occurs under the strongly aerated conditions required for optimal penicillin production (PubMed:24239699). There is a negative control of the transcription of the PR-toxin genes by the penicillin biosynthesis gene product(s), or by a regulatory peptide encoded by a small ORF inside the penicillin gene cluster (PubMed:24239699).</text>
</comment>
<comment type="similarity">
    <text evidence="11">Belongs to the short-chain dehydrogenases/reductases (SDR) family.</text>
</comment>
<dbReference type="EC" id="1.1.99.-" evidence="12"/>
<dbReference type="EMBL" id="AM920427">
    <property type="protein sequence ID" value="CAP80260.1"/>
    <property type="molecule type" value="Genomic_DNA"/>
</dbReference>
<dbReference type="RefSeq" id="XP_002557475.1">
    <property type="nucleotide sequence ID" value="XM_002557429.1"/>
</dbReference>
<dbReference type="SMR" id="B6H065"/>
<dbReference type="STRING" id="500485.B6H065"/>
<dbReference type="GlyCosmos" id="B6H065">
    <property type="glycosylation" value="1 site, No reported glycans"/>
</dbReference>
<dbReference type="GeneID" id="8313019"/>
<dbReference type="KEGG" id="pcs:N7525_001918"/>
<dbReference type="VEuPathDB" id="FungiDB:PCH_Pc12g06330"/>
<dbReference type="eggNOG" id="KOG0725">
    <property type="taxonomic scope" value="Eukaryota"/>
</dbReference>
<dbReference type="HOGENOM" id="CLU_010194_13_1_1"/>
<dbReference type="OMA" id="PVWFGWR"/>
<dbReference type="OrthoDB" id="37659at2759"/>
<dbReference type="BioCyc" id="PCHR:PC12G06330-MONOMER"/>
<dbReference type="Proteomes" id="UP000000724">
    <property type="component" value="Contig Pc00c12"/>
</dbReference>
<dbReference type="GO" id="GO:0016020">
    <property type="term" value="C:membrane"/>
    <property type="evidence" value="ECO:0007669"/>
    <property type="project" value="UniProtKB-SubCell"/>
</dbReference>
<dbReference type="GO" id="GO:0016491">
    <property type="term" value="F:oxidoreductase activity"/>
    <property type="evidence" value="ECO:0007669"/>
    <property type="project" value="UniProtKB-KW"/>
</dbReference>
<dbReference type="Gene3D" id="3.40.50.720">
    <property type="entry name" value="NAD(P)-binding Rossmann-like Domain"/>
    <property type="match status" value="1"/>
</dbReference>
<dbReference type="InterPro" id="IPR036291">
    <property type="entry name" value="NAD(P)-bd_dom_sf"/>
</dbReference>
<dbReference type="InterPro" id="IPR002347">
    <property type="entry name" value="SDR_fam"/>
</dbReference>
<dbReference type="PANTHER" id="PTHR43180">
    <property type="entry name" value="3-OXOACYL-(ACYL-CARRIER-PROTEIN) REDUCTASE (AFU_ORTHOLOGUE AFUA_6G11210)"/>
    <property type="match status" value="1"/>
</dbReference>
<dbReference type="PANTHER" id="PTHR43180:SF80">
    <property type="entry name" value="NAD(P)-BINDING PROTEIN"/>
    <property type="match status" value="1"/>
</dbReference>
<dbReference type="Pfam" id="PF00106">
    <property type="entry name" value="adh_short"/>
    <property type="match status" value="1"/>
</dbReference>
<dbReference type="PRINTS" id="PR00081">
    <property type="entry name" value="GDHRDH"/>
</dbReference>
<dbReference type="PRINTS" id="PR00080">
    <property type="entry name" value="SDRFAMILY"/>
</dbReference>
<dbReference type="SUPFAM" id="SSF51735">
    <property type="entry name" value="NAD(P)-binding Rossmann-fold domains"/>
    <property type="match status" value="1"/>
</dbReference>
<gene>
    <name evidence="10" type="primary">prx4</name>
    <name type="ORF">Pc12g06330</name>
    <name type="ORF">PCH_Pc12g06330</name>
</gene>
<organism>
    <name type="scientific">Penicillium rubens (strain ATCC 28089 / DSM 1075 / NRRL 1951 / Wisconsin 54-1255)</name>
    <name type="common">Penicillium chrysogenum</name>
    <dbReference type="NCBI Taxonomy" id="500485"/>
    <lineage>
        <taxon>Eukaryota</taxon>
        <taxon>Fungi</taxon>
        <taxon>Dikarya</taxon>
        <taxon>Ascomycota</taxon>
        <taxon>Pezizomycotina</taxon>
        <taxon>Eurotiomycetes</taxon>
        <taxon>Eurotiomycetidae</taxon>
        <taxon>Eurotiales</taxon>
        <taxon>Aspergillaceae</taxon>
        <taxon>Penicillium</taxon>
        <taxon>Penicillium chrysogenum species complex</taxon>
    </lineage>
</organism>
<keyword id="KW-0325">Glycoprotein</keyword>
<keyword id="KW-0472">Membrane</keyword>
<keyword id="KW-0521">NADP</keyword>
<keyword id="KW-0560">Oxidoreductase</keyword>
<keyword id="KW-1185">Reference proteome</keyword>
<keyword id="KW-0732">Signal</keyword>
<keyword id="KW-0812">Transmembrane</keyword>
<keyword id="KW-1133">Transmembrane helix</keyword>
<sequence>MIPRWQPASIALLLHLDTLRCHHVSVRPPRATMTSLSIKEEDIPRLDGKVVVISGGASGIGLAAANIFARAGAKIFLFDRNPPDSGEAPENSTFIKADVTSWAELKAAFAQAGHVDIAVANAGVSEEQPYFEDTFDEQGELKEPGFAVVDVNFKGTVMFTKLAVSYMRKQGKGGSVVITASATGYAPEQNLPVYSAIKSGLVGLVRSLRSTLPRFDISINAVAPAATITKLLPMDIAGPLMAAGLPVSSAHMVGLAVVYSAVARQPRMVETYGKENMLDLESKWNGRTILTLGEHYTELEEKLADLRPVWFGWRNTDLTKKQQATADFR</sequence>
<accession>B6H065</accession>
<protein>
    <recommendedName>
        <fullName evidence="10">Short-chain dehydrogenase/reductase prx4</fullName>
        <ecNumber evidence="12">1.1.99.-</ecNumber>
    </recommendedName>
    <alternativeName>
        <fullName evidence="10">PR-toxin biosynthesis cluster protein 4</fullName>
    </alternativeName>
</protein>
<name>PRX4_PENRW</name>
<reference key="1">
    <citation type="journal article" date="2008" name="Nat. Biotechnol.">
        <title>Genome sequencing and analysis of the filamentous fungus Penicillium chrysogenum.</title>
        <authorList>
            <person name="van den Berg M.A."/>
            <person name="Albang R."/>
            <person name="Albermann K."/>
            <person name="Badger J.H."/>
            <person name="Daran J.-M."/>
            <person name="Driessen A.J.M."/>
            <person name="Garcia-Estrada C."/>
            <person name="Fedorova N.D."/>
            <person name="Harris D.M."/>
            <person name="Heijne W.H.M."/>
            <person name="Joardar V.S."/>
            <person name="Kiel J.A.K.W."/>
            <person name="Kovalchuk A."/>
            <person name="Martin J.F."/>
            <person name="Nierman W.C."/>
            <person name="Nijland J.G."/>
            <person name="Pronk J.T."/>
            <person name="Roubos J.A."/>
            <person name="van der Klei I.J."/>
            <person name="van Peij N.N.M.E."/>
            <person name="Veenhuis M."/>
            <person name="von Doehren H."/>
            <person name="Wagner C."/>
            <person name="Wortman J.R."/>
            <person name="Bovenberg R.A.L."/>
        </authorList>
    </citation>
    <scope>NUCLEOTIDE SEQUENCE [LARGE SCALE GENOMIC DNA]</scope>
    <source>
        <strain>ATCC 28089 / DSM 1075 / NRRL 1951 / Wisconsin 54-1255</strain>
    </source>
</reference>
<reference key="2">
    <citation type="journal article" date="2014" name="Fungal Genet. Biol.">
        <title>Molecular characterization of the PR-toxin gene cluster in Penicillium roqueforti and Penicillium chrysogenum: cross talk of secondary metabolite pathways.</title>
        <authorList>
            <person name="Hidalgo P.I."/>
            <person name="Ullan R.V."/>
            <person name="Albillos S.M."/>
            <person name="Montero O."/>
            <person name="Fernandez-Bodega M.A."/>
            <person name="Garcia-Estrada C."/>
            <person name="Fernandez-Aguado M."/>
            <person name="Martin J.F."/>
        </authorList>
    </citation>
    <scope>FUNCTION</scope>
    <scope>INDUCTION</scope>
    <scope>PATHWAY</scope>
</reference>